<organism>
    <name type="scientific">Saccharomyces cerevisiae (strain ATCC 204508 / S288c)</name>
    <name type="common">Baker's yeast</name>
    <dbReference type="NCBI Taxonomy" id="559292"/>
    <lineage>
        <taxon>Eukaryota</taxon>
        <taxon>Fungi</taxon>
        <taxon>Dikarya</taxon>
        <taxon>Ascomycota</taxon>
        <taxon>Saccharomycotina</taxon>
        <taxon>Saccharomycetes</taxon>
        <taxon>Saccharomycetales</taxon>
        <taxon>Saccharomycetaceae</taxon>
        <taxon>Saccharomyces</taxon>
    </lineage>
</organism>
<keyword id="KW-0963">Cytoplasm</keyword>
<keyword id="KW-0378">Hydrolase</keyword>
<keyword id="KW-0539">Nucleus</keyword>
<keyword id="KW-0662">Pyridine nucleotide biosynthesis</keyword>
<keyword id="KW-0663">Pyridoxal phosphate</keyword>
<keyword id="KW-1185">Reference proteome</keyword>
<gene>
    <name evidence="1" type="primary">BNA5</name>
    <name type="ordered locus">YLR231C</name>
    <name type="ORF">L8083.14</name>
</gene>
<protein>
    <recommendedName>
        <fullName evidence="1">Kynureninase</fullName>
        <ecNumber evidence="1">3.7.1.3</ecNumber>
    </recommendedName>
    <alternativeName>
        <fullName evidence="1">Biosynthesis of nicotinic acid protein 5</fullName>
    </alternativeName>
    <alternativeName>
        <fullName evidence="1">L-kynurenine hydrolase</fullName>
    </alternativeName>
</protein>
<feature type="chain" id="PRO_0000218665" description="Kynureninase">
    <location>
        <begin position="1"/>
        <end position="453"/>
    </location>
</feature>
<feature type="binding site" evidence="1">
    <location>
        <position position="111"/>
    </location>
    <ligand>
        <name>pyridoxal 5'-phosphate</name>
        <dbReference type="ChEBI" id="CHEBI:597326"/>
    </ligand>
</feature>
<feature type="binding site" evidence="1">
    <location>
        <position position="112"/>
    </location>
    <ligand>
        <name>pyridoxal 5'-phosphate</name>
        <dbReference type="ChEBI" id="CHEBI:597326"/>
    </ligand>
</feature>
<feature type="binding site" evidence="1">
    <location>
        <begin position="139"/>
        <end position="142"/>
    </location>
    <ligand>
        <name>pyridoxal 5'-phosphate</name>
        <dbReference type="ChEBI" id="CHEBI:597326"/>
    </ligand>
</feature>
<feature type="binding site" evidence="1">
    <location>
        <position position="196"/>
    </location>
    <ligand>
        <name>pyridoxal 5'-phosphate</name>
        <dbReference type="ChEBI" id="CHEBI:597326"/>
    </ligand>
</feature>
<feature type="binding site" evidence="1">
    <location>
        <position position="226"/>
    </location>
    <ligand>
        <name>pyridoxal 5'-phosphate</name>
        <dbReference type="ChEBI" id="CHEBI:597326"/>
    </ligand>
</feature>
<feature type="binding site" evidence="1">
    <location>
        <position position="229"/>
    </location>
    <ligand>
        <name>pyridoxal 5'-phosphate</name>
        <dbReference type="ChEBI" id="CHEBI:597326"/>
    </ligand>
</feature>
<feature type="binding site" evidence="1">
    <location>
        <position position="251"/>
    </location>
    <ligand>
        <name>pyridoxal 5'-phosphate</name>
        <dbReference type="ChEBI" id="CHEBI:597326"/>
    </ligand>
</feature>
<feature type="binding site" evidence="1">
    <location>
        <position position="286"/>
    </location>
    <ligand>
        <name>pyridoxal 5'-phosphate</name>
        <dbReference type="ChEBI" id="CHEBI:597326"/>
    </ligand>
</feature>
<feature type="binding site" evidence="1">
    <location>
        <position position="314"/>
    </location>
    <ligand>
        <name>pyridoxal 5'-phosphate</name>
        <dbReference type="ChEBI" id="CHEBI:597326"/>
    </ligand>
</feature>
<feature type="modified residue" description="N6-(pyridoxal phosphate)lysine" evidence="1">
    <location>
        <position position="252"/>
    </location>
</feature>
<comment type="function">
    <text evidence="1 2">Catalyzes the cleavage of L-kynurenine (L-Kyn) and L-3-hydroxykynurenine (L-3OHKyn) into anthranilic acid (AA) and 3-hydroxyanthranilic acid (3-OHAA), respectively.</text>
</comment>
<comment type="catalytic activity">
    <reaction evidence="1">
        <text>L-kynurenine + H2O = anthranilate + L-alanine + H(+)</text>
        <dbReference type="Rhea" id="RHEA:16813"/>
        <dbReference type="ChEBI" id="CHEBI:15377"/>
        <dbReference type="ChEBI" id="CHEBI:15378"/>
        <dbReference type="ChEBI" id="CHEBI:16567"/>
        <dbReference type="ChEBI" id="CHEBI:57959"/>
        <dbReference type="ChEBI" id="CHEBI:57972"/>
        <dbReference type="EC" id="3.7.1.3"/>
    </reaction>
</comment>
<comment type="catalytic activity">
    <reaction evidence="1">
        <text>3-hydroxy-L-kynurenine + H2O = 3-hydroxyanthranilate + L-alanine + H(+)</text>
        <dbReference type="Rhea" id="RHEA:25143"/>
        <dbReference type="ChEBI" id="CHEBI:15377"/>
        <dbReference type="ChEBI" id="CHEBI:15378"/>
        <dbReference type="ChEBI" id="CHEBI:36559"/>
        <dbReference type="ChEBI" id="CHEBI:57972"/>
        <dbReference type="ChEBI" id="CHEBI:58125"/>
        <dbReference type="EC" id="3.7.1.3"/>
    </reaction>
</comment>
<comment type="cofactor">
    <cofactor evidence="1">
        <name>pyridoxal 5'-phosphate</name>
        <dbReference type="ChEBI" id="CHEBI:597326"/>
    </cofactor>
</comment>
<comment type="pathway">
    <text evidence="1 2">Amino-acid degradation; L-kynurenine degradation; L-alanine and anthranilate from L-kynurenine: step 1/1.</text>
</comment>
<comment type="pathway">
    <text evidence="1 2">Cofactor biosynthesis; NAD(+) biosynthesis; quinolinate from L-kynurenine: step 2/3.</text>
</comment>
<comment type="subunit">
    <text evidence="1">Homodimer.</text>
</comment>
<comment type="interaction">
    <interactant intactId="EBI-10016">
        <id>Q05979</id>
    </interactant>
    <interactant intactId="EBI-16219">
        <id>P39940</id>
        <label>RSP5</label>
    </interactant>
    <organismsDiffer>false</organismsDiffer>
    <experiments>2</experiments>
</comment>
<comment type="subcellular location">
    <subcellularLocation>
        <location evidence="1 3">Cytoplasm</location>
    </subcellularLocation>
    <subcellularLocation>
        <location evidence="3">Nucleus</location>
    </subcellularLocation>
</comment>
<comment type="miscellaneous">
    <text evidence="4">Present with 3060 molecules/cell in log phase SD medium.</text>
</comment>
<comment type="similarity">
    <text evidence="1">Belongs to the kynureninase family.</text>
</comment>
<dbReference type="EC" id="3.7.1.3" evidence="1"/>
<dbReference type="EMBL" id="U19027">
    <property type="protein sequence ID" value="AAB67417.1"/>
    <property type="molecule type" value="Genomic_DNA"/>
</dbReference>
<dbReference type="EMBL" id="BK006945">
    <property type="protein sequence ID" value="DAA09548.1"/>
    <property type="molecule type" value="Genomic_DNA"/>
</dbReference>
<dbReference type="PIR" id="S51453">
    <property type="entry name" value="S51453"/>
</dbReference>
<dbReference type="RefSeq" id="NP_013332.1">
    <property type="nucleotide sequence ID" value="NM_001182118.1"/>
</dbReference>
<dbReference type="SMR" id="Q05979"/>
<dbReference type="BioGRID" id="31501">
    <property type="interactions" value="63"/>
</dbReference>
<dbReference type="DIP" id="DIP-6518N"/>
<dbReference type="FunCoup" id="Q05979">
    <property type="interactions" value="298"/>
</dbReference>
<dbReference type="IntAct" id="Q05979">
    <property type="interactions" value="9"/>
</dbReference>
<dbReference type="MINT" id="Q05979"/>
<dbReference type="STRING" id="4932.YLR231C"/>
<dbReference type="iPTMnet" id="Q05979"/>
<dbReference type="PaxDb" id="4932-YLR231C"/>
<dbReference type="PeptideAtlas" id="Q05979"/>
<dbReference type="EnsemblFungi" id="YLR231C_mRNA">
    <property type="protein sequence ID" value="YLR231C"/>
    <property type="gene ID" value="YLR231C"/>
</dbReference>
<dbReference type="GeneID" id="850933"/>
<dbReference type="KEGG" id="sce:YLR231C"/>
<dbReference type="AGR" id="SGD:S000004221"/>
<dbReference type="SGD" id="S000004221">
    <property type="gene designation" value="BNA5"/>
</dbReference>
<dbReference type="VEuPathDB" id="FungiDB:YLR231C"/>
<dbReference type="eggNOG" id="KOG3846">
    <property type="taxonomic scope" value="Eukaryota"/>
</dbReference>
<dbReference type="GeneTree" id="ENSGT00390000008033"/>
<dbReference type="HOGENOM" id="CLU_003433_4_0_1"/>
<dbReference type="InParanoid" id="Q05979"/>
<dbReference type="OMA" id="LPGWNSH"/>
<dbReference type="OrthoDB" id="5978656at2759"/>
<dbReference type="BioCyc" id="MetaCyc:YLR231C-MONOMER"/>
<dbReference type="BioCyc" id="YEAST:YLR231C-MONOMER"/>
<dbReference type="Reactome" id="R-SCE-71240">
    <property type="pathway name" value="Tryptophan catabolism"/>
</dbReference>
<dbReference type="UniPathway" id="UPA00253">
    <property type="reaction ID" value="UER00329"/>
</dbReference>
<dbReference type="UniPathway" id="UPA00334">
    <property type="reaction ID" value="UER00455"/>
</dbReference>
<dbReference type="BioGRID-ORCS" id="850933">
    <property type="hits" value="3 hits in 10 CRISPR screens"/>
</dbReference>
<dbReference type="PRO" id="PR:Q05979"/>
<dbReference type="Proteomes" id="UP000002311">
    <property type="component" value="Chromosome XII"/>
</dbReference>
<dbReference type="RNAct" id="Q05979">
    <property type="molecule type" value="protein"/>
</dbReference>
<dbReference type="GO" id="GO:0005737">
    <property type="term" value="C:cytoplasm"/>
    <property type="evidence" value="ECO:0007005"/>
    <property type="project" value="SGD"/>
</dbReference>
<dbReference type="GO" id="GO:0005634">
    <property type="term" value="C:nucleus"/>
    <property type="evidence" value="ECO:0007005"/>
    <property type="project" value="SGD"/>
</dbReference>
<dbReference type="GO" id="GO:0030429">
    <property type="term" value="F:kynureninase activity"/>
    <property type="evidence" value="ECO:0000315"/>
    <property type="project" value="SGD"/>
</dbReference>
<dbReference type="GO" id="GO:0030170">
    <property type="term" value="F:pyridoxal phosphate binding"/>
    <property type="evidence" value="ECO:0007669"/>
    <property type="project" value="UniProtKB-UniRule"/>
</dbReference>
<dbReference type="GO" id="GO:0034354">
    <property type="term" value="P:'de novo' NAD biosynthetic process from L-tryptophan"/>
    <property type="evidence" value="ECO:0000316"/>
    <property type="project" value="SGD"/>
</dbReference>
<dbReference type="GO" id="GO:0043420">
    <property type="term" value="P:anthranilate metabolic process"/>
    <property type="evidence" value="ECO:0000318"/>
    <property type="project" value="GO_Central"/>
</dbReference>
<dbReference type="GO" id="GO:0097053">
    <property type="term" value="P:L-kynurenine catabolic process"/>
    <property type="evidence" value="ECO:0007669"/>
    <property type="project" value="UniProtKB-UniRule"/>
</dbReference>
<dbReference type="GO" id="GO:0019441">
    <property type="term" value="P:L-tryptophan catabolic process to kynurenine"/>
    <property type="evidence" value="ECO:0000318"/>
    <property type="project" value="GO_Central"/>
</dbReference>
<dbReference type="GO" id="GO:0019805">
    <property type="term" value="P:quinolinate biosynthetic process"/>
    <property type="evidence" value="ECO:0007669"/>
    <property type="project" value="UniProtKB-UniRule"/>
</dbReference>
<dbReference type="FunFam" id="3.40.640.10:FF:000031">
    <property type="entry name" value="Kynureninase"/>
    <property type="match status" value="1"/>
</dbReference>
<dbReference type="Gene3D" id="3.90.1150.10">
    <property type="entry name" value="Aspartate Aminotransferase, domain 1"/>
    <property type="match status" value="1"/>
</dbReference>
<dbReference type="Gene3D" id="3.40.640.10">
    <property type="entry name" value="Type I PLP-dependent aspartate aminotransferase-like (Major domain)"/>
    <property type="match status" value="1"/>
</dbReference>
<dbReference type="HAMAP" id="MF_01970">
    <property type="entry name" value="Kynureninase"/>
    <property type="match status" value="1"/>
</dbReference>
<dbReference type="InterPro" id="IPR010111">
    <property type="entry name" value="Kynureninase"/>
</dbReference>
<dbReference type="InterPro" id="IPR015424">
    <property type="entry name" value="PyrdxlP-dep_Trfase"/>
</dbReference>
<dbReference type="InterPro" id="IPR015421">
    <property type="entry name" value="PyrdxlP-dep_Trfase_major"/>
</dbReference>
<dbReference type="InterPro" id="IPR015422">
    <property type="entry name" value="PyrdxlP-dep_Trfase_small"/>
</dbReference>
<dbReference type="NCBIfam" id="TIGR01814">
    <property type="entry name" value="kynureninase"/>
    <property type="match status" value="1"/>
</dbReference>
<dbReference type="PANTHER" id="PTHR14084">
    <property type="entry name" value="KYNURENINASE"/>
    <property type="match status" value="1"/>
</dbReference>
<dbReference type="PANTHER" id="PTHR14084:SF0">
    <property type="entry name" value="KYNURENINASE"/>
    <property type="match status" value="1"/>
</dbReference>
<dbReference type="Pfam" id="PF22580">
    <property type="entry name" value="KYNU_C"/>
    <property type="match status" value="1"/>
</dbReference>
<dbReference type="PIRSF" id="PIRSF038800">
    <property type="entry name" value="KYNU"/>
    <property type="match status" value="1"/>
</dbReference>
<dbReference type="SUPFAM" id="SSF53383">
    <property type="entry name" value="PLP-dependent transferases"/>
    <property type="match status" value="1"/>
</dbReference>
<proteinExistence type="evidence at protein level"/>
<reference key="1">
    <citation type="journal article" date="1997" name="Nature">
        <title>The nucleotide sequence of Saccharomyces cerevisiae chromosome XII.</title>
        <authorList>
            <person name="Johnston M."/>
            <person name="Hillier L.W."/>
            <person name="Riles L."/>
            <person name="Albermann K."/>
            <person name="Andre B."/>
            <person name="Ansorge W."/>
            <person name="Benes V."/>
            <person name="Brueckner M."/>
            <person name="Delius H."/>
            <person name="Dubois E."/>
            <person name="Duesterhoeft A."/>
            <person name="Entian K.-D."/>
            <person name="Floeth M."/>
            <person name="Goffeau A."/>
            <person name="Hebling U."/>
            <person name="Heumann K."/>
            <person name="Heuss-Neitzel D."/>
            <person name="Hilbert H."/>
            <person name="Hilger F."/>
            <person name="Kleine K."/>
            <person name="Koetter P."/>
            <person name="Louis E.J."/>
            <person name="Messenguy F."/>
            <person name="Mewes H.-W."/>
            <person name="Miosga T."/>
            <person name="Moestl D."/>
            <person name="Mueller-Auer S."/>
            <person name="Nentwich U."/>
            <person name="Obermaier B."/>
            <person name="Piravandi E."/>
            <person name="Pohl T.M."/>
            <person name="Portetelle D."/>
            <person name="Purnelle B."/>
            <person name="Rechmann S."/>
            <person name="Rieger M."/>
            <person name="Rinke M."/>
            <person name="Rose M."/>
            <person name="Scharfe M."/>
            <person name="Scherens B."/>
            <person name="Scholler P."/>
            <person name="Schwager C."/>
            <person name="Schwarz S."/>
            <person name="Underwood A.P."/>
            <person name="Urrestarazu L.A."/>
            <person name="Vandenbol M."/>
            <person name="Verhasselt P."/>
            <person name="Vierendeels F."/>
            <person name="Voet M."/>
            <person name="Volckaert G."/>
            <person name="Voss H."/>
            <person name="Wambutt R."/>
            <person name="Wedler E."/>
            <person name="Wedler H."/>
            <person name="Zimmermann F.K."/>
            <person name="Zollner A."/>
            <person name="Hani J."/>
            <person name="Hoheisel J.D."/>
        </authorList>
    </citation>
    <scope>NUCLEOTIDE SEQUENCE [LARGE SCALE GENOMIC DNA]</scope>
    <source>
        <strain>ATCC 204508 / S288c</strain>
    </source>
</reference>
<reference key="2">
    <citation type="journal article" date="2014" name="G3 (Bethesda)">
        <title>The reference genome sequence of Saccharomyces cerevisiae: Then and now.</title>
        <authorList>
            <person name="Engel S.R."/>
            <person name="Dietrich F.S."/>
            <person name="Fisk D.G."/>
            <person name="Binkley G."/>
            <person name="Balakrishnan R."/>
            <person name="Costanzo M.C."/>
            <person name="Dwight S.S."/>
            <person name="Hitz B.C."/>
            <person name="Karra K."/>
            <person name="Nash R.S."/>
            <person name="Weng S."/>
            <person name="Wong E.D."/>
            <person name="Lloyd P."/>
            <person name="Skrzypek M.S."/>
            <person name="Miyasato S.R."/>
            <person name="Simison M."/>
            <person name="Cherry J.M."/>
        </authorList>
    </citation>
    <scope>GENOME REANNOTATION</scope>
    <source>
        <strain>ATCC 204508 / S288c</strain>
    </source>
</reference>
<reference key="3">
    <citation type="journal article" date="2002" name="FEBS Lett.">
        <title>Aerobic and anaerobic NAD+ metabolism in Saccharomyces cerevisiae.</title>
        <authorList>
            <person name="Panozzo C."/>
            <person name="Nawara M."/>
            <person name="Suski C."/>
            <person name="Kucharczyka R."/>
            <person name="Skoneczny M."/>
            <person name="Becam A.-M."/>
            <person name="Rytka J."/>
            <person name="Herbert C.J."/>
        </authorList>
    </citation>
    <scope>FUNCTION</scope>
    <scope>PATHWAY</scope>
</reference>
<reference key="4">
    <citation type="journal article" date="2003" name="Nature">
        <title>Global analysis of protein localization in budding yeast.</title>
        <authorList>
            <person name="Huh W.-K."/>
            <person name="Falvo J.V."/>
            <person name="Gerke L.C."/>
            <person name="Carroll A.S."/>
            <person name="Howson R.W."/>
            <person name="Weissman J.S."/>
            <person name="O'Shea E.K."/>
        </authorList>
    </citation>
    <scope>SUBCELLULAR LOCATION [LARGE SCALE ANALYSIS]</scope>
</reference>
<reference key="5">
    <citation type="journal article" date="2003" name="Nature">
        <title>Global analysis of protein expression in yeast.</title>
        <authorList>
            <person name="Ghaemmaghami S."/>
            <person name="Huh W.-K."/>
            <person name="Bower K."/>
            <person name="Howson R.W."/>
            <person name="Belle A."/>
            <person name="Dephoure N."/>
            <person name="O'Shea E.K."/>
            <person name="Weissman J.S."/>
        </authorList>
    </citation>
    <scope>LEVEL OF PROTEIN EXPRESSION [LARGE SCALE ANALYSIS]</scope>
</reference>
<sequence>MEKALELDGEYPESLRDEFNIPTFKSMGLSSDDKPVTYLCGNSLGLMPKSTRNSINAELDAWSDCAVESHFKHPEEARGKVPWVSIDLPILPLLAPIVGAQENEVAVMNSLTANLNSLLITFYKPTEKRFKILFEKGSFPSDYYAFYNQCKIHGISEPENVFIQIEPREGETYIRTQDILDTIEVNQDELALVCLSGVQYYTGQYFDIGRITSFAHQFPDILVGWDLAHAVGNVPLQLHDWGVDFACWCSYKYLNAGPGGIGGLFVHSKHTKPDPAKESLPRLAGWWGNDPAKRFQMLEVFEPIPGALGFRQSNPSVIDTVALRSSLELFAKFNGINEVRKRSLLLTNYMTELLEASKYYKHPLRIEKLPCFFTILTPTSTDEEHGAQLSLYFDSDTGKEDIMPKVFQYLHDHGVIGDARRPNVIRLAPAPLYNTFSDVYIAVNALNEAMDKL</sequence>
<name>KYNU_YEAST</name>
<accession>Q05979</accession>
<accession>D6VYN2</accession>
<evidence type="ECO:0000255" key="1">
    <source>
        <dbReference type="HAMAP-Rule" id="MF_03017"/>
    </source>
</evidence>
<evidence type="ECO:0000269" key="2">
    <source>
    </source>
</evidence>
<evidence type="ECO:0000269" key="3">
    <source>
    </source>
</evidence>
<evidence type="ECO:0000269" key="4">
    <source>
    </source>
</evidence>